<proteinExistence type="inferred from homology"/>
<accession>Q8XDH0</accession>
<evidence type="ECO:0000255" key="1">
    <source>
        <dbReference type="HAMAP-Rule" id="MF_00409"/>
    </source>
</evidence>
<sequence length="328" mass="35563">MIEKIWSGESPLWRLLLPLSWLYGLVSGAIRLCYKLKLKRAWRAPVPVVVVGNLTAGGNGKTPVVVWLVEQLQQRGIRVGVVSRGYGGKAESYPLLLSADTTTAQAGDEPVLIYQRTDAPVAVSPVRSDAVKAILAQHPDVQIIVTDDGLQHYRLARDVEIVVIDGVRRFGNGWWLPAGPMRERAGRLKSVDAVIVNGGVPRSGEIPMHLLPGQAVNLRTGTRCDVAQLEHVVAMAGIGHPPRFFATLKMCGVQPEKCVPLADHQSLNHADVSALVSTGQTLVMTEKDAVKCRAFAEENWWYLPVDAQLSGDEPAKLLAQLTSLASGN</sequence>
<comment type="function">
    <text evidence="1">Transfers the gamma-phosphate of ATP to the 4'-position of a tetraacyldisaccharide 1-phosphate intermediate (termed DS-1-P) to form tetraacyldisaccharide 1,4'-bis-phosphate (lipid IVA).</text>
</comment>
<comment type="catalytic activity">
    <reaction evidence="1">
        <text>a lipid A disaccharide + ATP = a lipid IVA + ADP + H(+)</text>
        <dbReference type="Rhea" id="RHEA:67840"/>
        <dbReference type="ChEBI" id="CHEBI:15378"/>
        <dbReference type="ChEBI" id="CHEBI:30616"/>
        <dbReference type="ChEBI" id="CHEBI:176343"/>
        <dbReference type="ChEBI" id="CHEBI:176425"/>
        <dbReference type="ChEBI" id="CHEBI:456216"/>
        <dbReference type="EC" id="2.7.1.130"/>
    </reaction>
</comment>
<comment type="pathway">
    <text evidence="1">Glycolipid biosynthesis; lipid IV(A) biosynthesis; lipid IV(A) from (3R)-3-hydroxytetradecanoyl-[acyl-carrier-protein] and UDP-N-acetyl-alpha-D-glucosamine: step 6/6.</text>
</comment>
<comment type="similarity">
    <text evidence="1">Belongs to the LpxK family.</text>
</comment>
<dbReference type="EC" id="2.7.1.130" evidence="1"/>
<dbReference type="EMBL" id="AE005174">
    <property type="protein sequence ID" value="AAG55400.1"/>
    <property type="molecule type" value="Genomic_DNA"/>
</dbReference>
<dbReference type="EMBL" id="BA000007">
    <property type="protein sequence ID" value="BAB34421.1"/>
    <property type="molecule type" value="Genomic_DNA"/>
</dbReference>
<dbReference type="PIR" id="D85617">
    <property type="entry name" value="D85617"/>
</dbReference>
<dbReference type="PIR" id="F90753">
    <property type="entry name" value="F90753"/>
</dbReference>
<dbReference type="RefSeq" id="NP_309025.1">
    <property type="nucleotide sequence ID" value="NC_002695.1"/>
</dbReference>
<dbReference type="RefSeq" id="WP_000570541.1">
    <property type="nucleotide sequence ID" value="NZ_VOAI01000006.1"/>
</dbReference>
<dbReference type="SMR" id="Q8XDH0"/>
<dbReference type="STRING" id="155864.Z1261"/>
<dbReference type="GeneID" id="917752"/>
<dbReference type="KEGG" id="ece:Z1261"/>
<dbReference type="KEGG" id="ecs:ECs_0998"/>
<dbReference type="PATRIC" id="fig|386585.9.peg.1118"/>
<dbReference type="eggNOG" id="COG1663">
    <property type="taxonomic scope" value="Bacteria"/>
</dbReference>
<dbReference type="HOGENOM" id="CLU_038816_2_0_6"/>
<dbReference type="OMA" id="RAFPDHH"/>
<dbReference type="UniPathway" id="UPA00359">
    <property type="reaction ID" value="UER00482"/>
</dbReference>
<dbReference type="Proteomes" id="UP000000558">
    <property type="component" value="Chromosome"/>
</dbReference>
<dbReference type="Proteomes" id="UP000002519">
    <property type="component" value="Chromosome"/>
</dbReference>
<dbReference type="GO" id="GO:0005886">
    <property type="term" value="C:plasma membrane"/>
    <property type="evidence" value="ECO:0007669"/>
    <property type="project" value="TreeGrafter"/>
</dbReference>
<dbReference type="GO" id="GO:0005524">
    <property type="term" value="F:ATP binding"/>
    <property type="evidence" value="ECO:0007669"/>
    <property type="project" value="UniProtKB-UniRule"/>
</dbReference>
<dbReference type="GO" id="GO:0009029">
    <property type="term" value="F:tetraacyldisaccharide 4'-kinase activity"/>
    <property type="evidence" value="ECO:0007669"/>
    <property type="project" value="UniProtKB-UniRule"/>
</dbReference>
<dbReference type="GO" id="GO:0009245">
    <property type="term" value="P:lipid A biosynthetic process"/>
    <property type="evidence" value="ECO:0007669"/>
    <property type="project" value="UniProtKB-UniRule"/>
</dbReference>
<dbReference type="GO" id="GO:0009244">
    <property type="term" value="P:lipopolysaccharide core region biosynthetic process"/>
    <property type="evidence" value="ECO:0007669"/>
    <property type="project" value="TreeGrafter"/>
</dbReference>
<dbReference type="HAMAP" id="MF_00409">
    <property type="entry name" value="LpxK"/>
    <property type="match status" value="1"/>
</dbReference>
<dbReference type="InterPro" id="IPR003758">
    <property type="entry name" value="LpxK"/>
</dbReference>
<dbReference type="InterPro" id="IPR027417">
    <property type="entry name" value="P-loop_NTPase"/>
</dbReference>
<dbReference type="NCBIfam" id="TIGR00682">
    <property type="entry name" value="lpxK"/>
    <property type="match status" value="1"/>
</dbReference>
<dbReference type="PANTHER" id="PTHR42724">
    <property type="entry name" value="TETRAACYLDISACCHARIDE 4'-KINASE"/>
    <property type="match status" value="1"/>
</dbReference>
<dbReference type="PANTHER" id="PTHR42724:SF1">
    <property type="entry name" value="TETRAACYLDISACCHARIDE 4'-KINASE, MITOCHONDRIAL-RELATED"/>
    <property type="match status" value="1"/>
</dbReference>
<dbReference type="Pfam" id="PF02606">
    <property type="entry name" value="LpxK"/>
    <property type="match status" value="1"/>
</dbReference>
<dbReference type="SUPFAM" id="SSF52540">
    <property type="entry name" value="P-loop containing nucleoside triphosphate hydrolases"/>
    <property type="match status" value="1"/>
</dbReference>
<keyword id="KW-0067">ATP-binding</keyword>
<keyword id="KW-0418">Kinase</keyword>
<keyword id="KW-0441">Lipid A biosynthesis</keyword>
<keyword id="KW-0444">Lipid biosynthesis</keyword>
<keyword id="KW-0443">Lipid metabolism</keyword>
<keyword id="KW-0547">Nucleotide-binding</keyword>
<keyword id="KW-1185">Reference proteome</keyword>
<keyword id="KW-0808">Transferase</keyword>
<gene>
    <name evidence="1" type="primary">lpxK</name>
    <name type="ordered locus">Z1261</name>
    <name type="ordered locus">ECs0998</name>
</gene>
<reference key="1">
    <citation type="journal article" date="2001" name="Nature">
        <title>Genome sequence of enterohaemorrhagic Escherichia coli O157:H7.</title>
        <authorList>
            <person name="Perna N.T."/>
            <person name="Plunkett G. III"/>
            <person name="Burland V."/>
            <person name="Mau B."/>
            <person name="Glasner J.D."/>
            <person name="Rose D.J."/>
            <person name="Mayhew G.F."/>
            <person name="Evans P.S."/>
            <person name="Gregor J."/>
            <person name="Kirkpatrick H.A."/>
            <person name="Posfai G."/>
            <person name="Hackett J."/>
            <person name="Klink S."/>
            <person name="Boutin A."/>
            <person name="Shao Y."/>
            <person name="Miller L."/>
            <person name="Grotbeck E.J."/>
            <person name="Davis N.W."/>
            <person name="Lim A."/>
            <person name="Dimalanta E.T."/>
            <person name="Potamousis K."/>
            <person name="Apodaca J."/>
            <person name="Anantharaman T.S."/>
            <person name="Lin J."/>
            <person name="Yen G."/>
            <person name="Schwartz D.C."/>
            <person name="Welch R.A."/>
            <person name="Blattner F.R."/>
        </authorList>
    </citation>
    <scope>NUCLEOTIDE SEQUENCE [LARGE SCALE GENOMIC DNA]</scope>
    <source>
        <strain>O157:H7 / EDL933 / ATCC 700927 / EHEC</strain>
    </source>
</reference>
<reference key="2">
    <citation type="journal article" date="2001" name="DNA Res.">
        <title>Complete genome sequence of enterohemorrhagic Escherichia coli O157:H7 and genomic comparison with a laboratory strain K-12.</title>
        <authorList>
            <person name="Hayashi T."/>
            <person name="Makino K."/>
            <person name="Ohnishi M."/>
            <person name="Kurokawa K."/>
            <person name="Ishii K."/>
            <person name="Yokoyama K."/>
            <person name="Han C.-G."/>
            <person name="Ohtsubo E."/>
            <person name="Nakayama K."/>
            <person name="Murata T."/>
            <person name="Tanaka M."/>
            <person name="Tobe T."/>
            <person name="Iida T."/>
            <person name="Takami H."/>
            <person name="Honda T."/>
            <person name="Sasakawa C."/>
            <person name="Ogasawara N."/>
            <person name="Yasunaga T."/>
            <person name="Kuhara S."/>
            <person name="Shiba T."/>
            <person name="Hattori M."/>
            <person name="Shinagawa H."/>
        </authorList>
    </citation>
    <scope>NUCLEOTIDE SEQUENCE [LARGE SCALE GENOMIC DNA]</scope>
    <source>
        <strain>O157:H7 / Sakai / RIMD 0509952 / EHEC</strain>
    </source>
</reference>
<feature type="chain" id="PRO_0000190925" description="Tetraacyldisaccharide 4'-kinase">
    <location>
        <begin position="1"/>
        <end position="328"/>
    </location>
</feature>
<feature type="binding site" evidence="1">
    <location>
        <begin position="55"/>
        <end position="62"/>
    </location>
    <ligand>
        <name>ATP</name>
        <dbReference type="ChEBI" id="CHEBI:30616"/>
    </ligand>
</feature>
<name>LPXK_ECO57</name>
<organism>
    <name type="scientific">Escherichia coli O157:H7</name>
    <dbReference type="NCBI Taxonomy" id="83334"/>
    <lineage>
        <taxon>Bacteria</taxon>
        <taxon>Pseudomonadati</taxon>
        <taxon>Pseudomonadota</taxon>
        <taxon>Gammaproteobacteria</taxon>
        <taxon>Enterobacterales</taxon>
        <taxon>Enterobacteriaceae</taxon>
        <taxon>Escherichia</taxon>
    </lineage>
</organism>
<protein>
    <recommendedName>
        <fullName evidence="1">Tetraacyldisaccharide 4'-kinase</fullName>
        <ecNumber evidence="1">2.7.1.130</ecNumber>
    </recommendedName>
    <alternativeName>
        <fullName evidence="1">Lipid A 4'-kinase</fullName>
    </alternativeName>
</protein>